<gene>
    <name evidence="1" type="primary">tusC</name>
    <name type="ordered locus">SG3989</name>
</gene>
<dbReference type="EMBL" id="AM933173">
    <property type="protein sequence ID" value="CAR39759.1"/>
    <property type="molecule type" value="Genomic_DNA"/>
</dbReference>
<dbReference type="RefSeq" id="WP_000820708.1">
    <property type="nucleotide sequence ID" value="NC_011274.1"/>
</dbReference>
<dbReference type="SMR" id="B5RH05"/>
<dbReference type="KEGG" id="seg:SG3989"/>
<dbReference type="HOGENOM" id="CLU_155943_1_0_6"/>
<dbReference type="Proteomes" id="UP000008321">
    <property type="component" value="Chromosome"/>
</dbReference>
<dbReference type="GO" id="GO:0005737">
    <property type="term" value="C:cytoplasm"/>
    <property type="evidence" value="ECO:0007669"/>
    <property type="project" value="UniProtKB-SubCell"/>
</dbReference>
<dbReference type="GO" id="GO:0008033">
    <property type="term" value="P:tRNA processing"/>
    <property type="evidence" value="ECO:0007669"/>
    <property type="project" value="UniProtKB-UniRule"/>
</dbReference>
<dbReference type="Gene3D" id="3.40.1260.10">
    <property type="entry name" value="DsrEFH-like"/>
    <property type="match status" value="1"/>
</dbReference>
<dbReference type="HAMAP" id="MF_00389">
    <property type="entry name" value="Thiourid_synth_C"/>
    <property type="match status" value="1"/>
</dbReference>
<dbReference type="InterPro" id="IPR027396">
    <property type="entry name" value="DsrEFH-like"/>
</dbReference>
<dbReference type="InterPro" id="IPR003787">
    <property type="entry name" value="Sulphur_relay_DsrE/F-like"/>
</dbReference>
<dbReference type="InterPro" id="IPR037450">
    <property type="entry name" value="Sulphur_relay_TusC"/>
</dbReference>
<dbReference type="InterPro" id="IPR017462">
    <property type="entry name" value="Sulphur_relay_TusC/DsrF"/>
</dbReference>
<dbReference type="NCBIfam" id="NF001238">
    <property type="entry name" value="PRK00211.1"/>
    <property type="match status" value="1"/>
</dbReference>
<dbReference type="NCBIfam" id="TIGR03010">
    <property type="entry name" value="sulf_tusC_dsrF"/>
    <property type="match status" value="1"/>
</dbReference>
<dbReference type="PANTHER" id="PTHR38780">
    <property type="entry name" value="PROTEIN TUSC"/>
    <property type="match status" value="1"/>
</dbReference>
<dbReference type="PANTHER" id="PTHR38780:SF1">
    <property type="entry name" value="PROTEIN TUSC"/>
    <property type="match status" value="1"/>
</dbReference>
<dbReference type="Pfam" id="PF02635">
    <property type="entry name" value="DsrE"/>
    <property type="match status" value="1"/>
</dbReference>
<dbReference type="SUPFAM" id="SSF75169">
    <property type="entry name" value="DsrEFH-like"/>
    <property type="match status" value="1"/>
</dbReference>
<keyword id="KW-0963">Cytoplasm</keyword>
<keyword id="KW-0819">tRNA processing</keyword>
<proteinExistence type="inferred from homology"/>
<feature type="chain" id="PRO_1000122847" description="Protein TusC">
    <location>
        <begin position="1"/>
        <end position="118"/>
    </location>
</feature>
<organism>
    <name type="scientific">Salmonella gallinarum (strain 287/91 / NCTC 13346)</name>
    <dbReference type="NCBI Taxonomy" id="550538"/>
    <lineage>
        <taxon>Bacteria</taxon>
        <taxon>Pseudomonadati</taxon>
        <taxon>Pseudomonadota</taxon>
        <taxon>Gammaproteobacteria</taxon>
        <taxon>Enterobacterales</taxon>
        <taxon>Enterobacteriaceae</taxon>
        <taxon>Salmonella</taxon>
    </lineage>
</organism>
<accession>B5RH05</accession>
<sequence length="118" mass="12984">MKRIAFVFSTAPHGSASGREGLDALLATSALTEALGVFFISDGVFQLLPGQKPDAVLARDYIATFKLFDLYDIDQCWICAASLRERGLESVNFVVDATPLEPVALRRELGNYDVILRF</sequence>
<reference key="1">
    <citation type="journal article" date="2008" name="Genome Res.">
        <title>Comparative genome analysis of Salmonella enteritidis PT4 and Salmonella gallinarum 287/91 provides insights into evolutionary and host adaptation pathways.</title>
        <authorList>
            <person name="Thomson N.R."/>
            <person name="Clayton D.J."/>
            <person name="Windhorst D."/>
            <person name="Vernikos G."/>
            <person name="Davidson S."/>
            <person name="Churcher C."/>
            <person name="Quail M.A."/>
            <person name="Stevens M."/>
            <person name="Jones M.A."/>
            <person name="Watson M."/>
            <person name="Barron A."/>
            <person name="Layton A."/>
            <person name="Pickard D."/>
            <person name="Kingsley R.A."/>
            <person name="Bignell A."/>
            <person name="Clark L."/>
            <person name="Harris B."/>
            <person name="Ormond D."/>
            <person name="Abdellah Z."/>
            <person name="Brooks K."/>
            <person name="Cherevach I."/>
            <person name="Chillingworth T."/>
            <person name="Woodward J."/>
            <person name="Norberczak H."/>
            <person name="Lord A."/>
            <person name="Arrowsmith C."/>
            <person name="Jagels K."/>
            <person name="Moule S."/>
            <person name="Mungall K."/>
            <person name="Saunders M."/>
            <person name="Whitehead S."/>
            <person name="Chabalgoity J.A."/>
            <person name="Maskell D."/>
            <person name="Humphreys T."/>
            <person name="Roberts M."/>
            <person name="Barrow P.A."/>
            <person name="Dougan G."/>
            <person name="Parkhill J."/>
        </authorList>
    </citation>
    <scope>NUCLEOTIDE SEQUENCE [LARGE SCALE GENOMIC DNA]</scope>
    <source>
        <strain>287/91 / NCTC 13346</strain>
    </source>
</reference>
<comment type="function">
    <text evidence="1">Part of a sulfur-relay system required for 2-thiolation of 5-methylaminomethyl-2-thiouridine (mnm(5)s(2)U) at tRNA wobble positions.</text>
</comment>
<comment type="subunit">
    <text evidence="1">Heterohexamer, formed by a dimer of trimers. The hexameric TusBCD complex contains 2 copies each of TusB, TusC and TusD. The TusBCD complex interacts with TusE.</text>
</comment>
<comment type="subcellular location">
    <subcellularLocation>
        <location evidence="1">Cytoplasm</location>
    </subcellularLocation>
</comment>
<comment type="similarity">
    <text evidence="1">Belongs to the DsrF/TusC family.</text>
</comment>
<name>TUSC_SALG2</name>
<protein>
    <recommendedName>
        <fullName evidence="1">Protein TusC</fullName>
    </recommendedName>
    <alternativeName>
        <fullName evidence="1">tRNA 2-thiouridine synthesizing protein C</fullName>
    </alternativeName>
</protein>
<evidence type="ECO:0000255" key="1">
    <source>
        <dbReference type="HAMAP-Rule" id="MF_00389"/>
    </source>
</evidence>